<gene>
    <name evidence="6" type="primary">IQD6</name>
    <name evidence="8" type="ordered locus">At2g26180</name>
    <name evidence="9" type="ORF">T1D16.18</name>
</gene>
<organism>
    <name type="scientific">Arabidopsis thaliana</name>
    <name type="common">Mouse-ear cress</name>
    <dbReference type="NCBI Taxonomy" id="3702"/>
    <lineage>
        <taxon>Eukaryota</taxon>
        <taxon>Viridiplantae</taxon>
        <taxon>Streptophyta</taxon>
        <taxon>Embryophyta</taxon>
        <taxon>Tracheophyta</taxon>
        <taxon>Spermatophyta</taxon>
        <taxon>Magnoliopsida</taxon>
        <taxon>eudicotyledons</taxon>
        <taxon>Gunneridae</taxon>
        <taxon>Pentapetalae</taxon>
        <taxon>rosids</taxon>
        <taxon>malvids</taxon>
        <taxon>Brassicales</taxon>
        <taxon>Brassicaceae</taxon>
        <taxon>Camelineae</taxon>
        <taxon>Arabidopsis</taxon>
    </lineage>
</organism>
<feature type="chain" id="PRO_0000453113" description="Protein IQ-DOMAIN 6">
    <location>
        <begin position="1"/>
        <end position="416"/>
    </location>
</feature>
<feature type="domain" description="IQ 1" evidence="2">
    <location>
        <begin position="83"/>
        <end position="111"/>
    </location>
</feature>
<feature type="domain" description="IQ 2" evidence="2">
    <location>
        <begin position="112"/>
        <end position="134"/>
    </location>
</feature>
<feature type="domain" description="IQ 3" evidence="2">
    <location>
        <begin position="135"/>
        <end position="158"/>
    </location>
</feature>
<feature type="region of interest" description="Calmodulin-binding" evidence="6">
    <location>
        <begin position="116"/>
        <end position="146"/>
    </location>
</feature>
<feature type="region of interest" description="Disordered" evidence="4">
    <location>
        <begin position="294"/>
        <end position="367"/>
    </location>
</feature>
<feature type="region of interest" description="Disordered" evidence="4">
    <location>
        <begin position="388"/>
        <end position="416"/>
    </location>
</feature>
<feature type="short sequence motif" description="Nuclear localization signal" evidence="3">
    <location>
        <begin position="14"/>
        <end position="21"/>
    </location>
</feature>
<feature type="compositionally biased region" description="Low complexity" evidence="4">
    <location>
        <begin position="317"/>
        <end position="328"/>
    </location>
</feature>
<feature type="compositionally biased region" description="Polar residues" evidence="4">
    <location>
        <begin position="388"/>
        <end position="397"/>
    </location>
</feature>
<keyword id="KW-0112">Calmodulin-binding</keyword>
<keyword id="KW-1003">Cell membrane</keyword>
<keyword id="KW-0963">Cytoplasm</keyword>
<keyword id="KW-0206">Cytoskeleton</keyword>
<keyword id="KW-0472">Membrane</keyword>
<keyword id="KW-0539">Nucleus</keyword>
<keyword id="KW-1185">Reference proteome</keyword>
<keyword id="KW-0677">Repeat</keyword>
<name>IQD6_ARATH</name>
<accession>O64852</accession>
<reference key="1">
    <citation type="journal article" date="1999" name="Nature">
        <title>Sequence and analysis of chromosome 2 of the plant Arabidopsis thaliana.</title>
        <authorList>
            <person name="Lin X."/>
            <person name="Kaul S."/>
            <person name="Rounsley S.D."/>
            <person name="Shea T.P."/>
            <person name="Benito M.-I."/>
            <person name="Town C.D."/>
            <person name="Fujii C.Y."/>
            <person name="Mason T.M."/>
            <person name="Bowman C.L."/>
            <person name="Barnstead M.E."/>
            <person name="Feldblyum T.V."/>
            <person name="Buell C.R."/>
            <person name="Ketchum K.A."/>
            <person name="Lee J.J."/>
            <person name="Ronning C.M."/>
            <person name="Koo H.L."/>
            <person name="Moffat K.S."/>
            <person name="Cronin L.A."/>
            <person name="Shen M."/>
            <person name="Pai G."/>
            <person name="Van Aken S."/>
            <person name="Umayam L."/>
            <person name="Tallon L.J."/>
            <person name="Gill J.E."/>
            <person name="Adams M.D."/>
            <person name="Carrera A.J."/>
            <person name="Creasy T.H."/>
            <person name="Goodman H.M."/>
            <person name="Somerville C.R."/>
            <person name="Copenhaver G.P."/>
            <person name="Preuss D."/>
            <person name="Nierman W.C."/>
            <person name="White O."/>
            <person name="Eisen J.A."/>
            <person name="Salzberg S.L."/>
            <person name="Fraser C.M."/>
            <person name="Venter J.C."/>
        </authorList>
    </citation>
    <scope>NUCLEOTIDE SEQUENCE [LARGE SCALE GENOMIC DNA]</scope>
    <source>
        <strain>cv. Columbia</strain>
    </source>
</reference>
<reference key="2">
    <citation type="journal article" date="2017" name="Plant J.">
        <title>Araport11: a complete reannotation of the Arabidopsis thaliana reference genome.</title>
        <authorList>
            <person name="Cheng C.Y."/>
            <person name="Krishnakumar V."/>
            <person name="Chan A.P."/>
            <person name="Thibaud-Nissen F."/>
            <person name="Schobel S."/>
            <person name="Town C.D."/>
        </authorList>
    </citation>
    <scope>GENOME REANNOTATION</scope>
    <source>
        <strain>cv. Columbia</strain>
    </source>
</reference>
<reference key="3">
    <citation type="submission" date="2006-12" db="EMBL/GenBank/DDBJ databases">
        <title>Arabidopsis ORF clones.</title>
        <authorList>
            <person name="Bautista V.R."/>
            <person name="Kim C.J."/>
            <person name="Chen H."/>
            <person name="Wu S.Y."/>
            <person name="De Los Reyes C."/>
            <person name="Ecker J.R."/>
        </authorList>
    </citation>
    <scope>NUCLEOTIDE SEQUENCE [LARGE SCALE MRNA]</scope>
    <source>
        <strain>cv. Columbia</strain>
    </source>
</reference>
<reference key="4">
    <citation type="journal article" date="2005" name="BMC Evol. Biol.">
        <title>Genome-wide comparative analysis of the IQD gene families in Arabidopsis thaliana and Oryza sativa.</title>
        <authorList>
            <person name="Abel S."/>
            <person name="Savchenko T."/>
            <person name="Levy M."/>
        </authorList>
    </citation>
    <scope>INTERACTION WITH CALMODULIN</scope>
    <scope>GENE FAMILY</scope>
    <scope>NOMENCLATURE</scope>
    <source>
        <strain>cv. Columbia</strain>
    </source>
</reference>
<reference key="5">
    <citation type="journal article" date="2005" name="Plant J.">
        <title>Arabidopsis IQD1, a novel calmodulin-binding nuclear protein, stimulates glucosinolate accumulation and plant defense.</title>
        <authorList>
            <person name="Levy M."/>
            <person name="Wang Q."/>
            <person name="Kaspi R."/>
            <person name="Parrella M.P."/>
            <person name="Abel S."/>
        </authorList>
    </citation>
    <scope>GENE FAMILY</scope>
</reference>
<reference key="6">
    <citation type="journal article" date="2017" name="Plant Physiol.">
        <title>The IQD family of calmodulin-binding proteins links calcium signaling to microtubules, membrane subdomains, and the nucleus.</title>
        <authorList>
            <person name="Buerstenbinder K."/>
            <person name="Moeller B."/>
            <person name="Ploetner R."/>
            <person name="Stamm G."/>
            <person name="Hause G."/>
            <person name="Mitra D."/>
            <person name="Abel S."/>
        </authorList>
    </citation>
    <scope>SUBCELLULAR LOCATION</scope>
    <source>
        <strain>cv. Columbia</strain>
    </source>
</reference>
<reference key="7">
    <citation type="journal article" date="2017" name="Plant Signal. Behav.">
        <title>Functions of IQD proteins as hubs in cellular calcium and auxin signaling: A toolbox for shape formation and tissue-specification in plants?</title>
        <authorList>
            <person name="Buerstenbinder K."/>
            <person name="Mitra D."/>
            <person name="Quegwer J."/>
        </authorList>
    </citation>
    <scope>REVIEW</scope>
</reference>
<dbReference type="EMBL" id="AC004484">
    <property type="protein sequence ID" value="AAC14531.1"/>
    <property type="molecule type" value="Genomic_DNA"/>
</dbReference>
<dbReference type="EMBL" id="CP002685">
    <property type="protein sequence ID" value="AEC07805.1"/>
    <property type="molecule type" value="Genomic_DNA"/>
</dbReference>
<dbReference type="EMBL" id="BT029734">
    <property type="protein sequence ID" value="ABM06004.1"/>
    <property type="molecule type" value="mRNA"/>
</dbReference>
<dbReference type="PIR" id="D84657">
    <property type="entry name" value="D84657"/>
</dbReference>
<dbReference type="PIR" id="T02606">
    <property type="entry name" value="T02606"/>
</dbReference>
<dbReference type="RefSeq" id="NP_180187.1">
    <property type="nucleotide sequence ID" value="NM_128176.3"/>
</dbReference>
<dbReference type="FunCoup" id="O64852">
    <property type="interactions" value="194"/>
</dbReference>
<dbReference type="IntAct" id="O64852">
    <property type="interactions" value="480"/>
</dbReference>
<dbReference type="STRING" id="3702.O64852"/>
<dbReference type="iPTMnet" id="O64852"/>
<dbReference type="PaxDb" id="3702-AT2G26180.1"/>
<dbReference type="ProteomicsDB" id="183272"/>
<dbReference type="EnsemblPlants" id="AT2G26180.1">
    <property type="protein sequence ID" value="AT2G26180.1"/>
    <property type="gene ID" value="AT2G26180"/>
</dbReference>
<dbReference type="GeneID" id="817158"/>
<dbReference type="Gramene" id="AT2G26180.1">
    <property type="protein sequence ID" value="AT2G26180.1"/>
    <property type="gene ID" value="AT2G26180"/>
</dbReference>
<dbReference type="KEGG" id="ath:AT2G26180"/>
<dbReference type="Araport" id="AT2G26180"/>
<dbReference type="TAIR" id="AT2G26180">
    <property type="gene designation" value="IQD6"/>
</dbReference>
<dbReference type="eggNOG" id="ENOG502QSVK">
    <property type="taxonomic scope" value="Eukaryota"/>
</dbReference>
<dbReference type="HOGENOM" id="CLU_037259_0_1_1"/>
<dbReference type="InParanoid" id="O64852"/>
<dbReference type="OMA" id="RARPNYM"/>
<dbReference type="OrthoDB" id="671489at2759"/>
<dbReference type="PhylomeDB" id="O64852"/>
<dbReference type="PRO" id="PR:O64852"/>
<dbReference type="Proteomes" id="UP000006548">
    <property type="component" value="Chromosome 2"/>
</dbReference>
<dbReference type="ExpressionAtlas" id="O64852">
    <property type="expression patterns" value="baseline and differential"/>
</dbReference>
<dbReference type="GO" id="GO:0016604">
    <property type="term" value="C:nuclear body"/>
    <property type="evidence" value="ECO:0007669"/>
    <property type="project" value="UniProtKB-SubCell"/>
</dbReference>
<dbReference type="GO" id="GO:0005634">
    <property type="term" value="C:nucleus"/>
    <property type="evidence" value="ECO:0000314"/>
    <property type="project" value="TAIR"/>
</dbReference>
<dbReference type="GO" id="GO:0009524">
    <property type="term" value="C:phragmoplast"/>
    <property type="evidence" value="ECO:0000314"/>
    <property type="project" value="TAIR"/>
</dbReference>
<dbReference type="GO" id="GO:0005886">
    <property type="term" value="C:plasma membrane"/>
    <property type="evidence" value="ECO:0007669"/>
    <property type="project" value="UniProtKB-SubCell"/>
</dbReference>
<dbReference type="GO" id="GO:0009574">
    <property type="term" value="C:preprophase band"/>
    <property type="evidence" value="ECO:0000314"/>
    <property type="project" value="TAIR"/>
</dbReference>
<dbReference type="GO" id="GO:0005516">
    <property type="term" value="F:calmodulin binding"/>
    <property type="evidence" value="ECO:0007669"/>
    <property type="project" value="UniProtKB-KW"/>
</dbReference>
<dbReference type="GO" id="GO:0007105">
    <property type="term" value="P:cytokinesis, division site positioning"/>
    <property type="evidence" value="ECO:0000314"/>
    <property type="project" value="TAIR"/>
</dbReference>
<dbReference type="CDD" id="cd23767">
    <property type="entry name" value="IQCD"/>
    <property type="match status" value="1"/>
</dbReference>
<dbReference type="FunFam" id="1.20.5.190:FF:000062">
    <property type="entry name" value="IQ-domain 11"/>
    <property type="match status" value="1"/>
</dbReference>
<dbReference type="Gene3D" id="1.20.5.190">
    <property type="match status" value="1"/>
</dbReference>
<dbReference type="InterPro" id="IPR000048">
    <property type="entry name" value="IQ_motif_EF-hand-BS"/>
</dbReference>
<dbReference type="PANTHER" id="PTHR32295">
    <property type="entry name" value="IQ-DOMAIN 5-RELATED"/>
    <property type="match status" value="1"/>
</dbReference>
<dbReference type="PANTHER" id="PTHR32295:SF95">
    <property type="entry name" value="PROTEIN IQ-DOMAIN 6"/>
    <property type="match status" value="1"/>
</dbReference>
<dbReference type="Pfam" id="PF00612">
    <property type="entry name" value="IQ"/>
    <property type="match status" value="1"/>
</dbReference>
<dbReference type="SMART" id="SM00015">
    <property type="entry name" value="IQ"/>
    <property type="match status" value="2"/>
</dbReference>
<dbReference type="PROSITE" id="PS50096">
    <property type="entry name" value="IQ"/>
    <property type="match status" value="2"/>
</dbReference>
<proteinExistence type="evidence at protein level"/>
<evidence type="ECO:0000250" key="1">
    <source>
        <dbReference type="UniProtKB" id="Q9SF32"/>
    </source>
</evidence>
<evidence type="ECO:0000255" key="2">
    <source>
        <dbReference type="PROSITE-ProRule" id="PRU00116"/>
    </source>
</evidence>
<evidence type="ECO:0000255" key="3">
    <source>
        <dbReference type="PROSITE-ProRule" id="PRU00768"/>
    </source>
</evidence>
<evidence type="ECO:0000256" key="4">
    <source>
        <dbReference type="SAM" id="MobiDB-lite"/>
    </source>
</evidence>
<evidence type="ECO:0000269" key="5">
    <source>
    </source>
</evidence>
<evidence type="ECO:0000303" key="6">
    <source>
    </source>
</evidence>
<evidence type="ECO:0000305" key="7"/>
<evidence type="ECO:0000312" key="8">
    <source>
        <dbReference type="Araport" id="AT2G26180"/>
    </source>
</evidence>
<evidence type="ECO:0000312" key="9">
    <source>
        <dbReference type="EMBL" id="AAC14531.1"/>
    </source>
</evidence>
<comment type="function">
    <text evidence="1">May be involved in cooperative interactions with calmodulins or calmodulin-like proteins (By similarity). Recruits calmodulin proteins to microtubules, thus being a potential scaffold in cellular signaling and trafficking (By similarity). May associate with nucleic acids and regulate gene expression at the transcriptional or post-transcriptional level (By similarity).</text>
</comment>
<comment type="subunit">
    <text evidence="1">Binds to multiple calmodulin (CaM) in the presence of Ca(2+) and CaM-like proteins.</text>
</comment>
<comment type="subcellular location">
    <subcellularLocation>
        <location evidence="3 5">Nucleus</location>
    </subcellularLocation>
    <subcellularLocation>
        <location evidence="5">Nucleus</location>
        <location evidence="5">Nuclear body</location>
    </subcellularLocation>
    <subcellularLocation>
        <location evidence="5">Cytoplasm</location>
        <location evidence="5">Cytoskeleton</location>
    </subcellularLocation>
    <subcellularLocation>
        <location evidence="5">Cell membrane</location>
    </subcellularLocation>
</comment>
<comment type="similarity">
    <text evidence="7">Belongs to the IQD family.</text>
</comment>
<protein>
    <recommendedName>
        <fullName evidence="6">Protein IQ-DOMAIN 6</fullName>
        <shortName evidence="6">AtIQD6</shortName>
    </recommendedName>
</protein>
<sequence length="416" mass="46890">MGASGKWVKSIIGLKKLEKDEIEKGNGKNKKWKLWRTTSVDSWKGFRGKHRSDSDGVDSSTVYSAAVATVLRAPPKDFKAVREEWAAIRIQTAFRGFLARRALRALKGIVRLQALVRGRQVRKQAAVTLRCMQALVRVQARVRARRVRMTVEGQAVQKLLDEHRTKSDLLKEVEEGWCDRKGTVDDIKSKLQQRQEGAFKRERALAYALAQKQWRSTTSSNLKTNSSISYLKSQEFDKNSWGWSWLERWMAARPWETRLMDTVDTAATPPPLPHKHLKSPETADVVQVRRNNVTTRVSAKPPPHMLSSSPGYEFNESSGSSSICTSTTPVSGKTGLVSDNSSSQAKKHKPSYMSLTESTKAKRRTNRGLRQSMDEFQFMKNSGMFTGELKTSPSSDPFVSFSKPLGVPTRFEKPRG</sequence>